<keyword id="KW-0963">Cytoplasm</keyword>
<keyword id="KW-0227">DNA damage</keyword>
<keyword id="KW-0234">DNA repair</keyword>
<keyword id="KW-0378">Hydrolase</keyword>
<organism>
    <name type="scientific">Staphylococcus aureus (strain USA300)</name>
    <dbReference type="NCBI Taxonomy" id="367830"/>
    <lineage>
        <taxon>Bacteria</taxon>
        <taxon>Bacillati</taxon>
        <taxon>Bacillota</taxon>
        <taxon>Bacilli</taxon>
        <taxon>Bacillales</taxon>
        <taxon>Staphylococcaceae</taxon>
        <taxon>Staphylococcus</taxon>
    </lineage>
</organism>
<dbReference type="EC" id="3.2.2.27" evidence="1"/>
<dbReference type="EMBL" id="CP000255">
    <property type="protein sequence ID" value="ABD21211.1"/>
    <property type="molecule type" value="Genomic_DNA"/>
</dbReference>
<dbReference type="RefSeq" id="WP_000455256.1">
    <property type="nucleotide sequence ID" value="NZ_CP027476.1"/>
</dbReference>
<dbReference type="SMR" id="Q2FJ62"/>
<dbReference type="KEGG" id="saa:SAUSA300_0563"/>
<dbReference type="HOGENOM" id="CLU_032162_3_1_9"/>
<dbReference type="OMA" id="PDNGYLM"/>
<dbReference type="Proteomes" id="UP000001939">
    <property type="component" value="Chromosome"/>
</dbReference>
<dbReference type="GO" id="GO:0005737">
    <property type="term" value="C:cytoplasm"/>
    <property type="evidence" value="ECO:0007669"/>
    <property type="project" value="UniProtKB-SubCell"/>
</dbReference>
<dbReference type="GO" id="GO:0004844">
    <property type="term" value="F:uracil DNA N-glycosylase activity"/>
    <property type="evidence" value="ECO:0007669"/>
    <property type="project" value="UniProtKB-UniRule"/>
</dbReference>
<dbReference type="GO" id="GO:0097510">
    <property type="term" value="P:base-excision repair, AP site formation via deaminated base removal"/>
    <property type="evidence" value="ECO:0007669"/>
    <property type="project" value="TreeGrafter"/>
</dbReference>
<dbReference type="CDD" id="cd10027">
    <property type="entry name" value="UDG-F1-like"/>
    <property type="match status" value="1"/>
</dbReference>
<dbReference type="FunFam" id="3.40.470.10:FF:000001">
    <property type="entry name" value="Uracil-DNA glycosylase"/>
    <property type="match status" value="1"/>
</dbReference>
<dbReference type="Gene3D" id="3.40.470.10">
    <property type="entry name" value="Uracil-DNA glycosylase-like domain"/>
    <property type="match status" value="1"/>
</dbReference>
<dbReference type="HAMAP" id="MF_00148">
    <property type="entry name" value="UDG"/>
    <property type="match status" value="1"/>
</dbReference>
<dbReference type="InterPro" id="IPR002043">
    <property type="entry name" value="UDG_fam1"/>
</dbReference>
<dbReference type="InterPro" id="IPR018085">
    <property type="entry name" value="Ura-DNA_Glyclase_AS"/>
</dbReference>
<dbReference type="InterPro" id="IPR005122">
    <property type="entry name" value="Uracil-DNA_glycosylase-like"/>
</dbReference>
<dbReference type="InterPro" id="IPR036895">
    <property type="entry name" value="Uracil-DNA_glycosylase-like_sf"/>
</dbReference>
<dbReference type="NCBIfam" id="NF003588">
    <property type="entry name" value="PRK05254.1-1"/>
    <property type="match status" value="1"/>
</dbReference>
<dbReference type="NCBIfam" id="NF003589">
    <property type="entry name" value="PRK05254.1-2"/>
    <property type="match status" value="1"/>
</dbReference>
<dbReference type="NCBIfam" id="NF003591">
    <property type="entry name" value="PRK05254.1-4"/>
    <property type="match status" value="1"/>
</dbReference>
<dbReference type="NCBIfam" id="NF003592">
    <property type="entry name" value="PRK05254.1-5"/>
    <property type="match status" value="1"/>
</dbReference>
<dbReference type="NCBIfam" id="TIGR00628">
    <property type="entry name" value="ung"/>
    <property type="match status" value="1"/>
</dbReference>
<dbReference type="PANTHER" id="PTHR11264">
    <property type="entry name" value="URACIL-DNA GLYCOSYLASE"/>
    <property type="match status" value="1"/>
</dbReference>
<dbReference type="PANTHER" id="PTHR11264:SF0">
    <property type="entry name" value="URACIL-DNA GLYCOSYLASE"/>
    <property type="match status" value="1"/>
</dbReference>
<dbReference type="Pfam" id="PF03167">
    <property type="entry name" value="UDG"/>
    <property type="match status" value="1"/>
</dbReference>
<dbReference type="SMART" id="SM00986">
    <property type="entry name" value="UDG"/>
    <property type="match status" value="1"/>
</dbReference>
<dbReference type="SMART" id="SM00987">
    <property type="entry name" value="UreE_C"/>
    <property type="match status" value="1"/>
</dbReference>
<dbReference type="SUPFAM" id="SSF52141">
    <property type="entry name" value="Uracil-DNA glycosylase-like"/>
    <property type="match status" value="1"/>
</dbReference>
<dbReference type="PROSITE" id="PS00130">
    <property type="entry name" value="U_DNA_GLYCOSYLASE"/>
    <property type="match status" value="1"/>
</dbReference>
<comment type="function">
    <text evidence="1">Excises uracil residues from the DNA which can arise as a result of misincorporation of dUMP residues by DNA polymerase or due to deamination of cytosine.</text>
</comment>
<comment type="catalytic activity">
    <reaction evidence="1">
        <text>Hydrolyzes single-stranded DNA or mismatched double-stranded DNA and polynucleotides, releasing free uracil.</text>
        <dbReference type="EC" id="3.2.2.27"/>
    </reaction>
</comment>
<comment type="subcellular location">
    <subcellularLocation>
        <location evidence="1">Cytoplasm</location>
    </subcellularLocation>
</comment>
<comment type="similarity">
    <text evidence="1">Belongs to the uracil-DNA glycosylase (UDG) superfamily. UNG family.</text>
</comment>
<sequence>MEWSQIFHDITTKHDFKAMHDFLEKEYSTAIVYPDRENIYQAFDLTPFENIKVVILGQDPYHGPNQAHGLAFSVQPNAKFPPSLRNMYKELADDIGCVRQTPHLQDWAREGVLLLNTVLTVRQGEANSHRDIGWETFTDEIIKAVSDYKEHVVFILWGKPAQQKIKLIDTSKHCIIKSVHPSPLSAYRGFFGSKPYSKANAYLESVGKSPINWCESEA</sequence>
<accession>Q2FJ62</accession>
<name>UNG_STAA3</name>
<gene>
    <name evidence="1" type="primary">ung</name>
    <name type="ordered locus">SAUSA300_0563</name>
</gene>
<reference key="1">
    <citation type="journal article" date="2006" name="Lancet">
        <title>Complete genome sequence of USA300, an epidemic clone of community-acquired meticillin-resistant Staphylococcus aureus.</title>
        <authorList>
            <person name="Diep B.A."/>
            <person name="Gill S.R."/>
            <person name="Chang R.F."/>
            <person name="Phan T.H."/>
            <person name="Chen J.H."/>
            <person name="Davidson M.G."/>
            <person name="Lin F."/>
            <person name="Lin J."/>
            <person name="Carleton H.A."/>
            <person name="Mongodin E.F."/>
            <person name="Sensabaugh G.F."/>
            <person name="Perdreau-Remington F."/>
        </authorList>
    </citation>
    <scope>NUCLEOTIDE SEQUENCE [LARGE SCALE GENOMIC DNA]</scope>
    <source>
        <strain>USA300</strain>
    </source>
</reference>
<feature type="chain" id="PRO_1000009944" description="Uracil-DNA glycosylase">
    <location>
        <begin position="1"/>
        <end position="218"/>
    </location>
</feature>
<feature type="active site" description="Proton acceptor" evidence="1">
    <location>
        <position position="59"/>
    </location>
</feature>
<protein>
    <recommendedName>
        <fullName evidence="1">Uracil-DNA glycosylase</fullName>
        <shortName evidence="1">UDG</shortName>
        <ecNumber evidence="1">3.2.2.27</ecNumber>
    </recommendedName>
</protein>
<proteinExistence type="inferred from homology"/>
<evidence type="ECO:0000255" key="1">
    <source>
        <dbReference type="HAMAP-Rule" id="MF_00148"/>
    </source>
</evidence>